<keyword id="KW-0001">2Fe-2S</keyword>
<keyword id="KW-0004">4Fe-4S</keyword>
<keyword id="KW-0093">Biotin biosynthesis</keyword>
<keyword id="KW-0408">Iron</keyword>
<keyword id="KW-0411">Iron-sulfur</keyword>
<keyword id="KW-0479">Metal-binding</keyword>
<keyword id="KW-1185">Reference proteome</keyword>
<keyword id="KW-0949">S-adenosyl-L-methionine</keyword>
<keyword id="KW-0808">Transferase</keyword>
<gene>
    <name evidence="1" type="primary">bioB</name>
    <name type="ordered locus">Sfri_1475</name>
</gene>
<evidence type="ECO:0000255" key="1">
    <source>
        <dbReference type="HAMAP-Rule" id="MF_01694"/>
    </source>
</evidence>
<evidence type="ECO:0000255" key="2">
    <source>
        <dbReference type="PROSITE-ProRule" id="PRU01266"/>
    </source>
</evidence>
<proteinExistence type="inferred from homology"/>
<name>BIOB_SHEFN</name>
<organism>
    <name type="scientific">Shewanella frigidimarina (strain NCIMB 400)</name>
    <dbReference type="NCBI Taxonomy" id="318167"/>
    <lineage>
        <taxon>Bacteria</taxon>
        <taxon>Pseudomonadati</taxon>
        <taxon>Pseudomonadota</taxon>
        <taxon>Gammaproteobacteria</taxon>
        <taxon>Alteromonadales</taxon>
        <taxon>Shewanellaceae</taxon>
        <taxon>Shewanella</taxon>
    </lineage>
</organism>
<feature type="chain" id="PRO_0000381618" description="Biotin synthase">
    <location>
        <begin position="1"/>
        <end position="350"/>
    </location>
</feature>
<feature type="domain" description="Radical SAM core" evidence="2">
    <location>
        <begin position="41"/>
        <end position="268"/>
    </location>
</feature>
<feature type="binding site" evidence="1">
    <location>
        <position position="56"/>
    </location>
    <ligand>
        <name>[4Fe-4S] cluster</name>
        <dbReference type="ChEBI" id="CHEBI:49883"/>
        <note>4Fe-4S-S-AdoMet</note>
    </ligand>
</feature>
<feature type="binding site" evidence="1">
    <location>
        <position position="60"/>
    </location>
    <ligand>
        <name>[4Fe-4S] cluster</name>
        <dbReference type="ChEBI" id="CHEBI:49883"/>
        <note>4Fe-4S-S-AdoMet</note>
    </ligand>
</feature>
<feature type="binding site" evidence="1">
    <location>
        <position position="63"/>
    </location>
    <ligand>
        <name>[4Fe-4S] cluster</name>
        <dbReference type="ChEBI" id="CHEBI:49883"/>
        <note>4Fe-4S-S-AdoMet</note>
    </ligand>
</feature>
<feature type="binding site" evidence="1">
    <location>
        <position position="100"/>
    </location>
    <ligand>
        <name>[2Fe-2S] cluster</name>
        <dbReference type="ChEBI" id="CHEBI:190135"/>
    </ligand>
</feature>
<feature type="binding site" evidence="1">
    <location>
        <position position="131"/>
    </location>
    <ligand>
        <name>[2Fe-2S] cluster</name>
        <dbReference type="ChEBI" id="CHEBI:190135"/>
    </ligand>
</feature>
<feature type="binding site" evidence="1">
    <location>
        <position position="191"/>
    </location>
    <ligand>
        <name>[2Fe-2S] cluster</name>
        <dbReference type="ChEBI" id="CHEBI:190135"/>
    </ligand>
</feature>
<feature type="binding site" evidence="1">
    <location>
        <position position="263"/>
    </location>
    <ligand>
        <name>[2Fe-2S] cluster</name>
        <dbReference type="ChEBI" id="CHEBI:190135"/>
    </ligand>
</feature>
<comment type="function">
    <text evidence="1">Catalyzes the conversion of dethiobiotin (DTB) to biotin by the insertion of a sulfur atom into dethiobiotin via a radical-based mechanism.</text>
</comment>
<comment type="catalytic activity">
    <reaction evidence="1">
        <text>(4R,5S)-dethiobiotin + (sulfur carrier)-SH + 2 reduced [2Fe-2S]-[ferredoxin] + 2 S-adenosyl-L-methionine = (sulfur carrier)-H + biotin + 2 5'-deoxyadenosine + 2 L-methionine + 2 oxidized [2Fe-2S]-[ferredoxin]</text>
        <dbReference type="Rhea" id="RHEA:22060"/>
        <dbReference type="Rhea" id="RHEA-COMP:10000"/>
        <dbReference type="Rhea" id="RHEA-COMP:10001"/>
        <dbReference type="Rhea" id="RHEA-COMP:14737"/>
        <dbReference type="Rhea" id="RHEA-COMP:14739"/>
        <dbReference type="ChEBI" id="CHEBI:17319"/>
        <dbReference type="ChEBI" id="CHEBI:29917"/>
        <dbReference type="ChEBI" id="CHEBI:33737"/>
        <dbReference type="ChEBI" id="CHEBI:33738"/>
        <dbReference type="ChEBI" id="CHEBI:57586"/>
        <dbReference type="ChEBI" id="CHEBI:57844"/>
        <dbReference type="ChEBI" id="CHEBI:59789"/>
        <dbReference type="ChEBI" id="CHEBI:64428"/>
        <dbReference type="ChEBI" id="CHEBI:149473"/>
        <dbReference type="EC" id="2.8.1.6"/>
    </reaction>
</comment>
<comment type="cofactor">
    <cofactor evidence="1">
        <name>[4Fe-4S] cluster</name>
        <dbReference type="ChEBI" id="CHEBI:49883"/>
    </cofactor>
    <text evidence="1">Binds 1 [4Fe-4S] cluster. The cluster is coordinated with 3 cysteines and an exchangeable S-adenosyl-L-methionine.</text>
</comment>
<comment type="cofactor">
    <cofactor evidence="1">
        <name>[2Fe-2S] cluster</name>
        <dbReference type="ChEBI" id="CHEBI:190135"/>
    </cofactor>
    <text evidence="1">Binds 1 [2Fe-2S] cluster. The cluster is coordinated with 3 cysteines and 1 arginine.</text>
</comment>
<comment type="pathway">
    <text evidence="1">Cofactor biosynthesis; biotin biosynthesis; biotin from 7,8-diaminononanoate: step 2/2.</text>
</comment>
<comment type="subunit">
    <text evidence="1">Homodimer.</text>
</comment>
<comment type="similarity">
    <text evidence="1">Belongs to the radical SAM superfamily. Biotin synthase family.</text>
</comment>
<reference key="1">
    <citation type="submission" date="2006-08" db="EMBL/GenBank/DDBJ databases">
        <title>Complete sequence of Shewanella frigidimarina NCIMB 400.</title>
        <authorList>
            <consortium name="US DOE Joint Genome Institute"/>
            <person name="Copeland A."/>
            <person name="Lucas S."/>
            <person name="Lapidus A."/>
            <person name="Barry K."/>
            <person name="Detter J.C."/>
            <person name="Glavina del Rio T."/>
            <person name="Hammon N."/>
            <person name="Israni S."/>
            <person name="Dalin E."/>
            <person name="Tice H."/>
            <person name="Pitluck S."/>
            <person name="Fredrickson J.K."/>
            <person name="Kolker E."/>
            <person name="McCuel L.A."/>
            <person name="DiChristina T."/>
            <person name="Nealson K.H."/>
            <person name="Newman D."/>
            <person name="Tiedje J.M."/>
            <person name="Zhou J."/>
            <person name="Romine M.F."/>
            <person name="Culley D.E."/>
            <person name="Serres M."/>
            <person name="Chertkov O."/>
            <person name="Brettin T."/>
            <person name="Bruce D."/>
            <person name="Han C."/>
            <person name="Tapia R."/>
            <person name="Gilna P."/>
            <person name="Schmutz J."/>
            <person name="Larimer F."/>
            <person name="Land M."/>
            <person name="Hauser L."/>
            <person name="Kyrpides N."/>
            <person name="Mikhailova N."/>
            <person name="Richardson P."/>
        </authorList>
    </citation>
    <scope>NUCLEOTIDE SEQUENCE [LARGE SCALE GENOMIC DNA]</scope>
    <source>
        <strain>NCIMB 400</strain>
    </source>
</reference>
<accession>Q084I8</accession>
<dbReference type="EC" id="2.8.1.6" evidence="1"/>
<dbReference type="EMBL" id="CP000447">
    <property type="protein sequence ID" value="ABI71327.1"/>
    <property type="molecule type" value="Genomic_DNA"/>
</dbReference>
<dbReference type="RefSeq" id="WP_011636948.1">
    <property type="nucleotide sequence ID" value="NC_008345.1"/>
</dbReference>
<dbReference type="SMR" id="Q084I8"/>
<dbReference type="STRING" id="318167.Sfri_1475"/>
<dbReference type="KEGG" id="sfr:Sfri_1475"/>
<dbReference type="eggNOG" id="COG0502">
    <property type="taxonomic scope" value="Bacteria"/>
</dbReference>
<dbReference type="HOGENOM" id="CLU_033172_1_2_6"/>
<dbReference type="OrthoDB" id="9786826at2"/>
<dbReference type="UniPathway" id="UPA00078">
    <property type="reaction ID" value="UER00162"/>
</dbReference>
<dbReference type="Proteomes" id="UP000000684">
    <property type="component" value="Chromosome"/>
</dbReference>
<dbReference type="GO" id="GO:0051537">
    <property type="term" value="F:2 iron, 2 sulfur cluster binding"/>
    <property type="evidence" value="ECO:0007669"/>
    <property type="project" value="UniProtKB-KW"/>
</dbReference>
<dbReference type="GO" id="GO:0051539">
    <property type="term" value="F:4 iron, 4 sulfur cluster binding"/>
    <property type="evidence" value="ECO:0007669"/>
    <property type="project" value="UniProtKB-KW"/>
</dbReference>
<dbReference type="GO" id="GO:0004076">
    <property type="term" value="F:biotin synthase activity"/>
    <property type="evidence" value="ECO:0007669"/>
    <property type="project" value="UniProtKB-UniRule"/>
</dbReference>
<dbReference type="GO" id="GO:0005506">
    <property type="term" value="F:iron ion binding"/>
    <property type="evidence" value="ECO:0007669"/>
    <property type="project" value="UniProtKB-UniRule"/>
</dbReference>
<dbReference type="GO" id="GO:0009102">
    <property type="term" value="P:biotin biosynthetic process"/>
    <property type="evidence" value="ECO:0007669"/>
    <property type="project" value="UniProtKB-UniRule"/>
</dbReference>
<dbReference type="CDD" id="cd01335">
    <property type="entry name" value="Radical_SAM"/>
    <property type="match status" value="1"/>
</dbReference>
<dbReference type="FunFam" id="3.20.20.70:FF:000011">
    <property type="entry name" value="Biotin synthase"/>
    <property type="match status" value="1"/>
</dbReference>
<dbReference type="Gene3D" id="3.20.20.70">
    <property type="entry name" value="Aldolase class I"/>
    <property type="match status" value="1"/>
</dbReference>
<dbReference type="HAMAP" id="MF_01694">
    <property type="entry name" value="BioB"/>
    <property type="match status" value="1"/>
</dbReference>
<dbReference type="InterPro" id="IPR013785">
    <property type="entry name" value="Aldolase_TIM"/>
</dbReference>
<dbReference type="InterPro" id="IPR010722">
    <property type="entry name" value="BATS_dom"/>
</dbReference>
<dbReference type="InterPro" id="IPR002684">
    <property type="entry name" value="Biotin_synth/BioAB"/>
</dbReference>
<dbReference type="InterPro" id="IPR024177">
    <property type="entry name" value="Biotin_synthase"/>
</dbReference>
<dbReference type="InterPro" id="IPR006638">
    <property type="entry name" value="Elp3/MiaA/NifB-like_rSAM"/>
</dbReference>
<dbReference type="InterPro" id="IPR007197">
    <property type="entry name" value="rSAM"/>
</dbReference>
<dbReference type="NCBIfam" id="TIGR00433">
    <property type="entry name" value="bioB"/>
    <property type="match status" value="1"/>
</dbReference>
<dbReference type="PANTHER" id="PTHR22976">
    <property type="entry name" value="BIOTIN SYNTHASE"/>
    <property type="match status" value="1"/>
</dbReference>
<dbReference type="PANTHER" id="PTHR22976:SF2">
    <property type="entry name" value="BIOTIN SYNTHASE, MITOCHONDRIAL"/>
    <property type="match status" value="1"/>
</dbReference>
<dbReference type="Pfam" id="PF06968">
    <property type="entry name" value="BATS"/>
    <property type="match status" value="1"/>
</dbReference>
<dbReference type="Pfam" id="PF04055">
    <property type="entry name" value="Radical_SAM"/>
    <property type="match status" value="1"/>
</dbReference>
<dbReference type="PIRSF" id="PIRSF001619">
    <property type="entry name" value="Biotin_synth"/>
    <property type="match status" value="1"/>
</dbReference>
<dbReference type="SFLD" id="SFLDF00272">
    <property type="entry name" value="biotin_synthase"/>
    <property type="match status" value="1"/>
</dbReference>
<dbReference type="SFLD" id="SFLDS00029">
    <property type="entry name" value="Radical_SAM"/>
    <property type="match status" value="1"/>
</dbReference>
<dbReference type="SMART" id="SM00876">
    <property type="entry name" value="BATS"/>
    <property type="match status" value="1"/>
</dbReference>
<dbReference type="SMART" id="SM00729">
    <property type="entry name" value="Elp3"/>
    <property type="match status" value="1"/>
</dbReference>
<dbReference type="SUPFAM" id="SSF102114">
    <property type="entry name" value="Radical SAM enzymes"/>
    <property type="match status" value="1"/>
</dbReference>
<dbReference type="PROSITE" id="PS51918">
    <property type="entry name" value="RADICAL_SAM"/>
    <property type="match status" value="1"/>
</dbReference>
<protein>
    <recommendedName>
        <fullName evidence="1">Biotin synthase</fullName>
        <ecNumber evidence="1">2.8.1.6</ecNumber>
    </recommendedName>
</protein>
<sequence>MSLAEVRHDWQKAQIEALFALPMNDLLFKAHSIHRETFDPNEVQISRLLSIKTGACPEDCKYCPQSARYDTGLEKERLLEIDKVLTEAKSAKAAGASRFCMGAAWRNPRDKDMPYLTQMVKDVRALGMETCMTLGMLSSEQAGKLADAGLDYYNHNLDTSPEYYGDVITTRTYQSRLDTLTNVRASGMKVCSGGIVGMGEKATDRAGLLQQLANLEQHPDSVPINMLVKVAGTPFENIDDLDPLEFVRTIAVARILMPKSRVRLSAGRESMSDELQSMCFFAGANSIFYGCKLLTTPNPEENDDMSLFRRLGLHPEQGPQANIENDSALLAKASAKQDKSTKQFFDAAAL</sequence>